<keyword id="KW-0119">Carbohydrate metabolism</keyword>
<keyword id="KW-0136">Cellulose degradation</keyword>
<keyword id="KW-0326">Glycosidase</keyword>
<keyword id="KW-0378">Hydrolase</keyword>
<keyword id="KW-0624">Polysaccharide degradation</keyword>
<keyword id="KW-0732">Signal</keyword>
<comment type="catalytic activity">
    <reaction>
        <text>Endohydrolysis of (1-&gt;4)-beta-D-glucosidic linkages in cellulose, lichenin and cereal beta-D-glucans.</text>
        <dbReference type="EC" id="3.2.1.4"/>
    </reaction>
</comment>
<comment type="similarity">
    <text evidence="7">Belongs to the glycosyl hydrolase 10 (cellulase F) family.</text>
</comment>
<dbReference type="EC" id="3.2.1.4"/>
<dbReference type="EMBL" id="L29380">
    <property type="protein sequence ID" value="AAA65588.1"/>
    <property type="molecule type" value="mRNA"/>
</dbReference>
<dbReference type="SMR" id="P46239"/>
<dbReference type="CAZy" id="CBM1">
    <property type="family name" value="Carbohydrate-Binding Module Family 1"/>
</dbReference>
<dbReference type="CAZy" id="GH10">
    <property type="family name" value="Glycoside Hydrolase Family 10"/>
</dbReference>
<dbReference type="VEuPathDB" id="FungiDB:FOC1_g10005625"/>
<dbReference type="VEuPathDB" id="FungiDB:FOC4_g10005497"/>
<dbReference type="VEuPathDB" id="FungiDB:FOIG_11547"/>
<dbReference type="VEuPathDB" id="FungiDB:FOMG_09444"/>
<dbReference type="VEuPathDB" id="FungiDB:FOXG_13415"/>
<dbReference type="VEuPathDB" id="FungiDB:FOZG_15322"/>
<dbReference type="VEuPathDB" id="FungiDB:HZS61_010952"/>
<dbReference type="GO" id="GO:0005576">
    <property type="term" value="C:extracellular region"/>
    <property type="evidence" value="ECO:0007669"/>
    <property type="project" value="InterPro"/>
</dbReference>
<dbReference type="GO" id="GO:0008810">
    <property type="term" value="F:cellulase activity"/>
    <property type="evidence" value="ECO:0007669"/>
    <property type="project" value="UniProtKB-EC"/>
</dbReference>
<dbReference type="GO" id="GO:0030248">
    <property type="term" value="F:cellulose binding"/>
    <property type="evidence" value="ECO:0007669"/>
    <property type="project" value="InterPro"/>
</dbReference>
<dbReference type="GO" id="GO:0031176">
    <property type="term" value="F:endo-1,4-beta-xylanase activity"/>
    <property type="evidence" value="ECO:0007669"/>
    <property type="project" value="UniProtKB-ARBA"/>
</dbReference>
<dbReference type="GO" id="GO:0030245">
    <property type="term" value="P:cellulose catabolic process"/>
    <property type="evidence" value="ECO:0007669"/>
    <property type="project" value="UniProtKB-KW"/>
</dbReference>
<dbReference type="Gene3D" id="3.20.20.80">
    <property type="entry name" value="Glycosidases"/>
    <property type="match status" value="1"/>
</dbReference>
<dbReference type="InterPro" id="IPR035971">
    <property type="entry name" value="CBD_sf"/>
</dbReference>
<dbReference type="InterPro" id="IPR000254">
    <property type="entry name" value="Cellulose-bd_dom_fun"/>
</dbReference>
<dbReference type="InterPro" id="IPR044846">
    <property type="entry name" value="GH10"/>
</dbReference>
<dbReference type="InterPro" id="IPR031158">
    <property type="entry name" value="GH10_AS"/>
</dbReference>
<dbReference type="InterPro" id="IPR001000">
    <property type="entry name" value="GH10_dom"/>
</dbReference>
<dbReference type="InterPro" id="IPR017853">
    <property type="entry name" value="Glycoside_hydrolase_SF"/>
</dbReference>
<dbReference type="PANTHER" id="PTHR31490:SF76">
    <property type="entry name" value="ENDO-1,4-BETA-XYLANASE C"/>
    <property type="match status" value="1"/>
</dbReference>
<dbReference type="PANTHER" id="PTHR31490">
    <property type="entry name" value="GLYCOSYL HYDROLASE"/>
    <property type="match status" value="1"/>
</dbReference>
<dbReference type="Pfam" id="PF00734">
    <property type="entry name" value="CBM_1"/>
    <property type="match status" value="1"/>
</dbReference>
<dbReference type="Pfam" id="PF00331">
    <property type="entry name" value="Glyco_hydro_10"/>
    <property type="match status" value="1"/>
</dbReference>
<dbReference type="PRINTS" id="PR00134">
    <property type="entry name" value="GLHYDRLASE10"/>
</dbReference>
<dbReference type="SMART" id="SM00236">
    <property type="entry name" value="fCBD"/>
    <property type="match status" value="1"/>
</dbReference>
<dbReference type="SMART" id="SM00633">
    <property type="entry name" value="Glyco_10"/>
    <property type="match status" value="1"/>
</dbReference>
<dbReference type="SUPFAM" id="SSF51445">
    <property type="entry name" value="(Trans)glycosidases"/>
    <property type="match status" value="1"/>
</dbReference>
<dbReference type="SUPFAM" id="SSF57180">
    <property type="entry name" value="Cellulose-binding domain"/>
    <property type="match status" value="1"/>
</dbReference>
<dbReference type="PROSITE" id="PS00562">
    <property type="entry name" value="CBM1_1"/>
    <property type="match status" value="1"/>
</dbReference>
<dbReference type="PROSITE" id="PS51164">
    <property type="entry name" value="CBM1_2"/>
    <property type="match status" value="1"/>
</dbReference>
<dbReference type="PROSITE" id="PS00591">
    <property type="entry name" value="GH10_1"/>
    <property type="match status" value="1"/>
</dbReference>
<dbReference type="PROSITE" id="PS51760">
    <property type="entry name" value="GH10_2"/>
    <property type="match status" value="1"/>
</dbReference>
<name>GUNF_FUSOX</name>
<protein>
    <recommendedName>
        <fullName>Putative endoglucanase type F</fullName>
        <ecNumber>3.2.1.4</ecNumber>
    </recommendedName>
    <alternativeName>
        <fullName>Cellulase</fullName>
    </alternativeName>
    <alternativeName>
        <fullName>Endo-1,4-beta-glucanase</fullName>
    </alternativeName>
</protein>
<organism>
    <name type="scientific">Fusarium oxysporum</name>
    <name type="common">Fusarium vascular wilt</name>
    <dbReference type="NCBI Taxonomy" id="5507"/>
    <lineage>
        <taxon>Eukaryota</taxon>
        <taxon>Fungi</taxon>
        <taxon>Dikarya</taxon>
        <taxon>Ascomycota</taxon>
        <taxon>Pezizomycotina</taxon>
        <taxon>Sordariomycetes</taxon>
        <taxon>Hypocreomycetidae</taxon>
        <taxon>Hypocreales</taxon>
        <taxon>Nectriaceae</taxon>
        <taxon>Fusarium</taxon>
        <taxon>Fusarium oxysporum species complex</taxon>
    </lineage>
</organism>
<feature type="signal peptide" evidence="2">
    <location>
        <begin position="1"/>
        <end position="19"/>
    </location>
</feature>
<feature type="chain" id="PRO_0000007961" description="Putative endoglucanase type F">
    <location>
        <begin position="20"/>
        <end position="385"/>
    </location>
</feature>
<feature type="domain" description="CBM1" evidence="3">
    <location>
        <begin position="23"/>
        <end position="53"/>
    </location>
</feature>
<feature type="domain" description="GH10" evidence="4">
    <location>
        <begin position="105"/>
        <end position="384"/>
    </location>
</feature>
<feature type="region of interest" description="Linker">
    <location>
        <begin position="53"/>
        <end position="84"/>
    </location>
</feature>
<feature type="region of interest" description="Disordered" evidence="6">
    <location>
        <begin position="56"/>
        <end position="84"/>
    </location>
</feature>
<feature type="compositionally biased region" description="Gly residues" evidence="6">
    <location>
        <begin position="67"/>
        <end position="83"/>
    </location>
</feature>
<feature type="active site" description="Proton donor" evidence="1">
    <location>
        <position position="210"/>
    </location>
</feature>
<feature type="active site" description="Nucleophile" evidence="5">
    <location>
        <position position="321"/>
    </location>
</feature>
<proteinExistence type="evidence at transcript level"/>
<reference key="1">
    <citation type="journal article" date="1994" name="Gene">
        <title>The use of conserved cellulase family-specific sequences to clone cellulase homologue cDNAs from Fusarium oxysporum.</title>
        <authorList>
            <person name="Sheppard P.O."/>
            <person name="Grant F.J."/>
            <person name="Oort P.J."/>
            <person name="Sprecher C.A."/>
            <person name="Foster D.C."/>
            <person name="Hagen F.S."/>
            <person name="Upshall A."/>
            <person name="McKnight G.L."/>
            <person name="O'Hara P.J."/>
        </authorList>
    </citation>
    <scope>NUCLEOTIDE SEQUENCE [MRNA]</scope>
</reference>
<accession>P46239</accession>
<sequence>MHTLSVLLALAPVSALAQAPIWGQCGGNGWTGATTCASGLKCEKINDWYYQCVPGSGGSEPQPSSTQGGGTPQPTGGNSGGTGLDAKFKAKGKQYFGTEIDHYHLNNNPLINIVKAQFGQVTCENSMKWDAIEPSRNSFTFSNADKVVDFATQNGKLIRGHTLLWHSQLPQWVQNINDRSTLTAVIENHVKTMVTRYKGKILQWDVVNNEIFAEDGNLRDSVFSRVLGEDFVGIAFRAARAADPAAKLYINDYNLDKSDYAKVTRGMVAHVNKWIAAGIPIDGIGSQGHLAAPSGWNPASGVPAALRALAASDAKEIAITELDIAGASANDYLTVMNACLAVPKCVGITVWGVSDKDSWRPGDNPLLYDSNYQPKAAFNALANAL</sequence>
<evidence type="ECO:0000250" key="1"/>
<evidence type="ECO:0000255" key="2"/>
<evidence type="ECO:0000255" key="3">
    <source>
        <dbReference type="PROSITE-ProRule" id="PRU00597"/>
    </source>
</evidence>
<evidence type="ECO:0000255" key="4">
    <source>
        <dbReference type="PROSITE-ProRule" id="PRU01096"/>
    </source>
</evidence>
<evidence type="ECO:0000255" key="5">
    <source>
        <dbReference type="PROSITE-ProRule" id="PRU10061"/>
    </source>
</evidence>
<evidence type="ECO:0000256" key="6">
    <source>
        <dbReference type="SAM" id="MobiDB-lite"/>
    </source>
</evidence>
<evidence type="ECO:0000305" key="7"/>